<comment type="subunit">
    <text evidence="4">Interacts with CRISP3.</text>
</comment>
<comment type="subcellular location">
    <subcellularLocation>
        <location evidence="5">Secreted</location>
    </subcellularLocation>
</comment>
<comment type="tissue specificity">
    <text evidence="5">Plasma.</text>
</comment>
<protein>
    <recommendedName>
        <fullName evidence="1">Alpha-1B-glycoprotein</fullName>
    </recommendedName>
    <alternativeName>
        <fullName evidence="1 6">Alpha-1-B glycoprotein</fullName>
    </alternativeName>
</protein>
<sequence>MSAWAALLLLWGLSLSPVTEQATFFDPRPSLWAEAGSPLAPWADVTLTCQSPLPTQEFQLLKDGVGQEPVHLESPAHEHRFPLGPVTSTTRGLYRCSYKGNNDWISPSNLVEVTGAEPLPAPSISTSPVSWITPGLNTTLLCLSGLRGVTFLLRLEGEDQFLEVAEAPEATQATFPVHRAGNYSCSYRTHAAGTPSEPSATVTIEELDPPPAPTLTVDRESAKVLRPGSSASLTCVAPLSGVDFQLRRGAEEQLVPRASTSPDRVFFRLSALAAGDGSGYTCRYRLRSELAAWSRDSAPAELVLSDGTLPAPELSAEPAILSPTPGALVQLRCRAPRAGVRFALVRKDAGGRQVQRVLSPAGPEAQFELRGVSAVDSGNYSCVYVDTSPPFAGSKPSATLELRVDGPLPRPQLRALWTGALTPGRDAVLRCEAEVPDVSFLLLRAGEEEPLAVAWSTHGPADLVLTSVGPQHAGTYSCRYRTGGPRSLLSELSDPVELRVAGS</sequence>
<reference evidence="6" key="1">
    <citation type="submission" date="2005-09" db="EMBL/GenBank/DDBJ databases">
        <authorList>
            <consortium name="NIH - Mammalian Gene Collection (MGC) project"/>
        </authorList>
    </citation>
    <scope>NUCLEOTIDE SEQUENCE [LARGE SCALE MRNA]</scope>
    <source>
        <strain evidence="6">Hereford</strain>
        <tissue evidence="6">Testis</tissue>
    </source>
</reference>
<reference evidence="5" key="2">
    <citation type="journal article" date="2010" name="Biochim. Biophys. Acta">
        <title>Human CRISP-3 binds serum alpha1B-glycoprotein across species.</title>
        <authorList>
            <person name="Udby L."/>
            <person name="Johnsen A.H."/>
            <person name="Borregaard N."/>
        </authorList>
    </citation>
    <scope>PROTEIN SEQUENCE OF 22-36</scope>
    <scope>INTERACTION WITH CRISP3</scope>
    <scope>GLYCOSYLATION</scope>
    <source>
        <tissue evidence="4">Serum</tissue>
    </source>
</reference>
<dbReference type="EMBL" id="BC105374">
    <property type="protein sequence ID" value="AAI05375.1"/>
    <property type="molecule type" value="mRNA"/>
</dbReference>
<dbReference type="RefSeq" id="NP_001039708.1">
    <property type="nucleotide sequence ID" value="NM_001046243.2"/>
</dbReference>
<dbReference type="SMR" id="Q2KJF1"/>
<dbReference type="FunCoup" id="Q2KJF1">
    <property type="interactions" value="116"/>
</dbReference>
<dbReference type="STRING" id="9913.ENSBTAP00000069446"/>
<dbReference type="MEROPS" id="I43.950"/>
<dbReference type="GlyCosmos" id="Q2KJF1">
    <property type="glycosylation" value="3 sites, No reported glycans"/>
</dbReference>
<dbReference type="GlyGen" id="Q2KJF1">
    <property type="glycosylation" value="3 sites"/>
</dbReference>
<dbReference type="PaxDb" id="9913-ENSBTAP00000012837"/>
<dbReference type="PeptideAtlas" id="Q2KJF1"/>
<dbReference type="GeneID" id="518955"/>
<dbReference type="KEGG" id="bta:518955"/>
<dbReference type="CTD" id="1"/>
<dbReference type="VEuPathDB" id="HostDB:ENSBTAG00000009735"/>
<dbReference type="eggNOG" id="ENOG502RYEX">
    <property type="taxonomic scope" value="Eukaryota"/>
</dbReference>
<dbReference type="HOGENOM" id="CLU_042929_1_0_1"/>
<dbReference type="InParanoid" id="Q2KJF1"/>
<dbReference type="OrthoDB" id="9450204at2759"/>
<dbReference type="TreeFam" id="TF336644"/>
<dbReference type="Reactome" id="R-BTA-114608">
    <property type="pathway name" value="Platelet degranulation"/>
</dbReference>
<dbReference type="Reactome" id="R-BTA-6798695">
    <property type="pathway name" value="Neutrophil degranulation"/>
</dbReference>
<dbReference type="Proteomes" id="UP000009136">
    <property type="component" value="Chromosome 18"/>
</dbReference>
<dbReference type="Bgee" id="ENSBTAG00000009735">
    <property type="expression patterns" value="Expressed in liver and 26 other cell types or tissues"/>
</dbReference>
<dbReference type="GO" id="GO:0005576">
    <property type="term" value="C:extracellular region"/>
    <property type="evidence" value="ECO:0007669"/>
    <property type="project" value="UniProtKB-SubCell"/>
</dbReference>
<dbReference type="GO" id="GO:0005886">
    <property type="term" value="C:plasma membrane"/>
    <property type="evidence" value="ECO:0000318"/>
    <property type="project" value="GO_Central"/>
</dbReference>
<dbReference type="GO" id="GO:0007166">
    <property type="term" value="P:cell surface receptor signaling pathway"/>
    <property type="evidence" value="ECO:0007669"/>
    <property type="project" value="UniProtKB-ARBA"/>
</dbReference>
<dbReference type="GO" id="GO:0002764">
    <property type="term" value="P:immune response-regulating signaling pathway"/>
    <property type="evidence" value="ECO:0000318"/>
    <property type="project" value="GO_Central"/>
</dbReference>
<dbReference type="FunFam" id="2.60.40.10:FF:000033">
    <property type="entry name" value="Killer cell immunoglobulin-like receptor"/>
    <property type="match status" value="3"/>
</dbReference>
<dbReference type="Gene3D" id="2.60.40.10">
    <property type="entry name" value="Immunoglobulins"/>
    <property type="match status" value="5"/>
</dbReference>
<dbReference type="InterPro" id="IPR016332">
    <property type="entry name" value="A1B_glyco/leuk_Ig-like_rcpt"/>
</dbReference>
<dbReference type="InterPro" id="IPR007110">
    <property type="entry name" value="Ig-like_dom"/>
</dbReference>
<dbReference type="InterPro" id="IPR036179">
    <property type="entry name" value="Ig-like_dom_sf"/>
</dbReference>
<dbReference type="InterPro" id="IPR013783">
    <property type="entry name" value="Ig-like_fold"/>
</dbReference>
<dbReference type="InterPro" id="IPR050412">
    <property type="entry name" value="Ig-like_Receptors_ImmuneReg"/>
</dbReference>
<dbReference type="InterPro" id="IPR003599">
    <property type="entry name" value="Ig_sub"/>
</dbReference>
<dbReference type="InterPro" id="IPR003598">
    <property type="entry name" value="Ig_sub2"/>
</dbReference>
<dbReference type="InterPro" id="IPR013151">
    <property type="entry name" value="Immunoglobulin_dom"/>
</dbReference>
<dbReference type="PANTHER" id="PTHR11738">
    <property type="entry name" value="MHC CLASS I NK CELL RECEPTOR"/>
    <property type="match status" value="1"/>
</dbReference>
<dbReference type="PANTHER" id="PTHR11738:SF186">
    <property type="entry name" value="OSTEOCLAST-ASSOCIATED IMMUNOGLOBULIN-LIKE RECEPTOR"/>
    <property type="match status" value="1"/>
</dbReference>
<dbReference type="Pfam" id="PF00047">
    <property type="entry name" value="ig"/>
    <property type="match status" value="1"/>
</dbReference>
<dbReference type="PIRSF" id="PIRSF001979">
    <property type="entry name" value="Alpha_1B_glycoprot_prd"/>
    <property type="match status" value="1"/>
</dbReference>
<dbReference type="SMART" id="SM00409">
    <property type="entry name" value="IG"/>
    <property type="match status" value="4"/>
</dbReference>
<dbReference type="SMART" id="SM00408">
    <property type="entry name" value="IGc2"/>
    <property type="match status" value="4"/>
</dbReference>
<dbReference type="SUPFAM" id="SSF48726">
    <property type="entry name" value="Immunoglobulin"/>
    <property type="match status" value="5"/>
</dbReference>
<dbReference type="PROSITE" id="PS50835">
    <property type="entry name" value="IG_LIKE"/>
    <property type="match status" value="2"/>
</dbReference>
<feature type="signal peptide" evidence="4">
    <location>
        <begin position="1"/>
        <end position="21"/>
    </location>
</feature>
<feature type="chain" id="PRO_0000348606" description="Alpha-1B-glycoprotein" evidence="4">
    <location>
        <begin position="22"/>
        <end position="503"/>
    </location>
</feature>
<feature type="domain" description="Ig-like V-type 1" evidence="2">
    <location>
        <begin position="27"/>
        <end position="115"/>
    </location>
</feature>
<feature type="domain" description="Ig-like V-type 2" evidence="2">
    <location>
        <begin position="117"/>
        <end position="204"/>
    </location>
</feature>
<feature type="domain" description="Ig-like V-type 3" evidence="2">
    <location>
        <begin position="208"/>
        <end position="305"/>
    </location>
</feature>
<feature type="domain" description="Ig-like V-type 4" evidence="2">
    <location>
        <begin position="307"/>
        <end position="405"/>
    </location>
</feature>
<feature type="domain" description="Ig-like V-type 5" evidence="2">
    <location>
        <begin position="406"/>
        <end position="501"/>
    </location>
</feature>
<feature type="glycosylation site" description="N-linked (GlcNAc...) asparagine" evidence="2">
    <location>
        <position position="137"/>
    </location>
</feature>
<feature type="glycosylation site" description="N-linked (GlcNAc...) asparagine" evidence="2">
    <location>
        <position position="182"/>
    </location>
</feature>
<feature type="glycosylation site" description="N-linked (GlcNAc...) asparagine" evidence="2">
    <location>
        <position position="379"/>
    </location>
</feature>
<feature type="disulfide bond" evidence="1 3">
    <location>
        <begin position="49"/>
        <end position="96"/>
    </location>
</feature>
<feature type="disulfide bond" evidence="1 3">
    <location>
        <begin position="142"/>
        <end position="185"/>
    </location>
</feature>
<feature type="disulfide bond" evidence="1 3">
    <location>
        <begin position="235"/>
        <end position="282"/>
    </location>
</feature>
<feature type="disulfide bond" evidence="1 3">
    <location>
        <begin position="333"/>
        <end position="382"/>
    </location>
</feature>
<feature type="disulfide bond" evidence="1 3">
    <location>
        <begin position="431"/>
        <end position="478"/>
    </location>
</feature>
<keyword id="KW-0903">Direct protein sequencing</keyword>
<keyword id="KW-1015">Disulfide bond</keyword>
<keyword id="KW-0325">Glycoprotein</keyword>
<keyword id="KW-0393">Immunoglobulin domain</keyword>
<keyword id="KW-1185">Reference proteome</keyword>
<keyword id="KW-0677">Repeat</keyword>
<keyword id="KW-0964">Secreted</keyword>
<keyword id="KW-0732">Signal</keyword>
<gene>
    <name evidence="6" type="primary">A1BG</name>
</gene>
<evidence type="ECO:0000250" key="1">
    <source>
        <dbReference type="UniProtKB" id="P04217"/>
    </source>
</evidence>
<evidence type="ECO:0000255" key="2"/>
<evidence type="ECO:0000255" key="3">
    <source>
        <dbReference type="PROSITE-ProRule" id="PRU00114"/>
    </source>
</evidence>
<evidence type="ECO:0000269" key="4">
    <source>
    </source>
</evidence>
<evidence type="ECO:0000305" key="5"/>
<evidence type="ECO:0000312" key="6">
    <source>
        <dbReference type="EMBL" id="AAI05375.1"/>
    </source>
</evidence>
<name>A1BG_BOVIN</name>
<accession>Q2KJF1</accession>
<proteinExistence type="evidence at protein level"/>
<organism>
    <name type="scientific">Bos taurus</name>
    <name type="common">Bovine</name>
    <dbReference type="NCBI Taxonomy" id="9913"/>
    <lineage>
        <taxon>Eukaryota</taxon>
        <taxon>Metazoa</taxon>
        <taxon>Chordata</taxon>
        <taxon>Craniata</taxon>
        <taxon>Vertebrata</taxon>
        <taxon>Euteleostomi</taxon>
        <taxon>Mammalia</taxon>
        <taxon>Eutheria</taxon>
        <taxon>Laurasiatheria</taxon>
        <taxon>Artiodactyla</taxon>
        <taxon>Ruminantia</taxon>
        <taxon>Pecora</taxon>
        <taxon>Bovidae</taxon>
        <taxon>Bovinae</taxon>
        <taxon>Bos</taxon>
    </lineage>
</organism>